<proteinExistence type="inferred from homology"/>
<dbReference type="EC" id="3.4.21.-"/>
<dbReference type="EMBL" id="AL009126">
    <property type="protein sequence ID" value="CAB15213.2"/>
    <property type="molecule type" value="Genomic_DNA"/>
</dbReference>
<dbReference type="EMBL" id="X04603">
    <property type="protein sequence ID" value="CAA28272.1"/>
    <property type="status" value="ALT_FRAME"/>
    <property type="molecule type" value="Genomic_DNA"/>
</dbReference>
<dbReference type="PIR" id="E70025">
    <property type="entry name" value="E70025"/>
</dbReference>
<dbReference type="RefSeq" id="NP_391103.2">
    <property type="nucleotide sequence ID" value="NC_000964.3"/>
</dbReference>
<dbReference type="RefSeq" id="WP_003243690.1">
    <property type="nucleotide sequence ID" value="NZ_OZ025638.1"/>
</dbReference>
<dbReference type="SMR" id="P39839"/>
<dbReference type="FunCoup" id="P39839">
    <property type="interactions" value="18"/>
</dbReference>
<dbReference type="STRING" id="224308.BSU32230"/>
<dbReference type="ESTHER" id="bacsu-yuxl">
    <property type="family name" value="ACPH_Peptidase_S9"/>
</dbReference>
<dbReference type="PaxDb" id="224308-BSU32230"/>
<dbReference type="EnsemblBacteria" id="CAB15213">
    <property type="protein sequence ID" value="CAB15213"/>
    <property type="gene ID" value="BSU_32230"/>
</dbReference>
<dbReference type="GeneID" id="936648"/>
<dbReference type="KEGG" id="bsu:BSU32230"/>
<dbReference type="PATRIC" id="fig|224308.179.peg.3489"/>
<dbReference type="eggNOG" id="COG0823">
    <property type="taxonomic scope" value="Bacteria"/>
</dbReference>
<dbReference type="eggNOG" id="COG1506">
    <property type="taxonomic scope" value="Bacteria"/>
</dbReference>
<dbReference type="eggNOG" id="COG4946">
    <property type="taxonomic scope" value="Bacteria"/>
</dbReference>
<dbReference type="InParanoid" id="P39839"/>
<dbReference type="OrthoDB" id="108903at2"/>
<dbReference type="PhylomeDB" id="P39839"/>
<dbReference type="BioCyc" id="BSUB:BSU32230-MONOMER"/>
<dbReference type="Proteomes" id="UP000001570">
    <property type="component" value="Chromosome"/>
</dbReference>
<dbReference type="GO" id="GO:0004252">
    <property type="term" value="F:serine-type endopeptidase activity"/>
    <property type="evidence" value="ECO:0000318"/>
    <property type="project" value="GO_Central"/>
</dbReference>
<dbReference type="GO" id="GO:0006508">
    <property type="term" value="P:proteolysis"/>
    <property type="evidence" value="ECO:0007669"/>
    <property type="project" value="UniProtKB-KW"/>
</dbReference>
<dbReference type="FunFam" id="3.40.50.1820:FF:000028">
    <property type="entry name" value="S9 family peptidase"/>
    <property type="match status" value="1"/>
</dbReference>
<dbReference type="Gene3D" id="3.40.50.1820">
    <property type="entry name" value="alpha/beta hydrolase"/>
    <property type="match status" value="1"/>
</dbReference>
<dbReference type="Gene3D" id="2.120.10.30">
    <property type="entry name" value="TolB, C-terminal domain"/>
    <property type="match status" value="2"/>
</dbReference>
<dbReference type="InterPro" id="IPR011042">
    <property type="entry name" value="6-blade_b-propeller_TolB-like"/>
</dbReference>
<dbReference type="InterPro" id="IPR029058">
    <property type="entry name" value="AB_hydrolase_fold"/>
</dbReference>
<dbReference type="InterPro" id="IPR011659">
    <property type="entry name" value="PD40"/>
</dbReference>
<dbReference type="InterPro" id="IPR001375">
    <property type="entry name" value="Peptidase_S9_cat"/>
</dbReference>
<dbReference type="PANTHER" id="PTHR42776:SF27">
    <property type="entry name" value="DIPEPTIDYL PEPTIDASE FAMILY MEMBER 6"/>
    <property type="match status" value="1"/>
</dbReference>
<dbReference type="PANTHER" id="PTHR42776">
    <property type="entry name" value="SERINE PEPTIDASE S9 FAMILY MEMBER"/>
    <property type="match status" value="1"/>
</dbReference>
<dbReference type="Pfam" id="PF07676">
    <property type="entry name" value="PD40"/>
    <property type="match status" value="3"/>
</dbReference>
<dbReference type="Pfam" id="PF00326">
    <property type="entry name" value="Peptidase_S9"/>
    <property type="match status" value="1"/>
</dbReference>
<dbReference type="SUPFAM" id="SSF53474">
    <property type="entry name" value="alpha/beta-Hydrolases"/>
    <property type="match status" value="1"/>
</dbReference>
<dbReference type="SUPFAM" id="SSF82171">
    <property type="entry name" value="DPP6 N-terminal domain-like"/>
    <property type="match status" value="1"/>
</dbReference>
<comment type="similarity">
    <text evidence="2">Belongs to the peptidase S9C family.</text>
</comment>
<protein>
    <recommendedName>
        <fullName>Uncharacterized peptidase YuxL</fullName>
        <ecNumber>3.4.21.-</ecNumber>
    </recommendedName>
</protein>
<keyword id="KW-0378">Hydrolase</keyword>
<keyword id="KW-0645">Protease</keyword>
<keyword id="KW-1185">Reference proteome</keyword>
<keyword id="KW-0720">Serine protease</keyword>
<evidence type="ECO:0000250" key="1"/>
<evidence type="ECO:0000305" key="2"/>
<gene>
    <name type="primary">yuxL</name>
    <name type="ordered locus">BSU32230</name>
</gene>
<sequence length="657" mass="73699">MKKLITADDITAIVSVTDPQYAPDGTRAAYVKSQVNQEKDSYTSNIWIYETKTGGSVPWTHGEKRSTDPRWSPDGRTLAFISDREGDAAQLYIMSTEGGEARKLTDIPYGVSKPLWSPDGESILVTVSLGEGESIDDREKTEQDSYEPVEVQGLSYKRDGKGLTRGAYAQLVLVSVKSGEMKELTSHKADHGDPAFSPDGKWLVFSANLTETDDASKPHDVYIMSLESGDLKQVTPHRGSFGSSSFSPDGRYLALLGNEKEYKNATLSKAWLYDIEQGRLTCLTEMLDVHLADALIGDSLIGGAEQRPIWTKDSQGFYVIGTDQGSTGIYYISIEGLVYPIRLEKEYINSFSLSPDEQHFIASVTKPDRPSELYSIPLGQEEKQLTGANDKFVREHTISIPEEIQYATEDGVMVNGWLMRPAQMEGETTYPLILNIHGGPHMMYGHTYFHEFQVLAAKGYAVVYINPRGSHGYGQEFVNAVRGDYGGKDYDDVMQAVDEAIKRDPHIDPKRLGVTGGSYGGFMTNWIVGQTNRFKAAVTQRSISNWISFHGVSDIGYFFTDWQLEHDMFEDTEKLWDRSPLKYAANVETPLLILHGERDDRCPIEQAEQLFIALKKMGKETKLVRFPNASHNLSRTGHPRQRIKRLNYISSWFDQHL</sequence>
<reference key="1">
    <citation type="journal article" date="1997" name="Nature">
        <title>The complete genome sequence of the Gram-positive bacterium Bacillus subtilis.</title>
        <authorList>
            <person name="Kunst F."/>
            <person name="Ogasawara N."/>
            <person name="Moszer I."/>
            <person name="Albertini A.M."/>
            <person name="Alloni G."/>
            <person name="Azevedo V."/>
            <person name="Bertero M.G."/>
            <person name="Bessieres P."/>
            <person name="Bolotin A."/>
            <person name="Borchert S."/>
            <person name="Borriss R."/>
            <person name="Boursier L."/>
            <person name="Brans A."/>
            <person name="Braun M."/>
            <person name="Brignell S.C."/>
            <person name="Bron S."/>
            <person name="Brouillet S."/>
            <person name="Bruschi C.V."/>
            <person name="Caldwell B."/>
            <person name="Capuano V."/>
            <person name="Carter N.M."/>
            <person name="Choi S.-K."/>
            <person name="Codani J.-J."/>
            <person name="Connerton I.F."/>
            <person name="Cummings N.J."/>
            <person name="Daniel R.A."/>
            <person name="Denizot F."/>
            <person name="Devine K.M."/>
            <person name="Duesterhoeft A."/>
            <person name="Ehrlich S.D."/>
            <person name="Emmerson P.T."/>
            <person name="Entian K.-D."/>
            <person name="Errington J."/>
            <person name="Fabret C."/>
            <person name="Ferrari E."/>
            <person name="Foulger D."/>
            <person name="Fritz C."/>
            <person name="Fujita M."/>
            <person name="Fujita Y."/>
            <person name="Fuma S."/>
            <person name="Galizzi A."/>
            <person name="Galleron N."/>
            <person name="Ghim S.-Y."/>
            <person name="Glaser P."/>
            <person name="Goffeau A."/>
            <person name="Golightly E.J."/>
            <person name="Grandi G."/>
            <person name="Guiseppi G."/>
            <person name="Guy B.J."/>
            <person name="Haga K."/>
            <person name="Haiech J."/>
            <person name="Harwood C.R."/>
            <person name="Henaut A."/>
            <person name="Hilbert H."/>
            <person name="Holsappel S."/>
            <person name="Hosono S."/>
            <person name="Hullo M.-F."/>
            <person name="Itaya M."/>
            <person name="Jones L.-M."/>
            <person name="Joris B."/>
            <person name="Karamata D."/>
            <person name="Kasahara Y."/>
            <person name="Klaerr-Blanchard M."/>
            <person name="Klein C."/>
            <person name="Kobayashi Y."/>
            <person name="Koetter P."/>
            <person name="Koningstein G."/>
            <person name="Krogh S."/>
            <person name="Kumano M."/>
            <person name="Kurita K."/>
            <person name="Lapidus A."/>
            <person name="Lardinois S."/>
            <person name="Lauber J."/>
            <person name="Lazarevic V."/>
            <person name="Lee S.-M."/>
            <person name="Levine A."/>
            <person name="Liu H."/>
            <person name="Masuda S."/>
            <person name="Mauel C."/>
            <person name="Medigue C."/>
            <person name="Medina N."/>
            <person name="Mellado R.P."/>
            <person name="Mizuno M."/>
            <person name="Moestl D."/>
            <person name="Nakai S."/>
            <person name="Noback M."/>
            <person name="Noone D."/>
            <person name="O'Reilly M."/>
            <person name="Ogawa K."/>
            <person name="Ogiwara A."/>
            <person name="Oudega B."/>
            <person name="Park S.-H."/>
            <person name="Parro V."/>
            <person name="Pohl T.M."/>
            <person name="Portetelle D."/>
            <person name="Porwollik S."/>
            <person name="Prescott A.M."/>
            <person name="Presecan E."/>
            <person name="Pujic P."/>
            <person name="Purnelle B."/>
            <person name="Rapoport G."/>
            <person name="Rey M."/>
            <person name="Reynolds S."/>
            <person name="Rieger M."/>
            <person name="Rivolta C."/>
            <person name="Rocha E."/>
            <person name="Roche B."/>
            <person name="Rose M."/>
            <person name="Sadaie Y."/>
            <person name="Sato T."/>
            <person name="Scanlan E."/>
            <person name="Schleich S."/>
            <person name="Schroeter R."/>
            <person name="Scoffone F."/>
            <person name="Sekiguchi J."/>
            <person name="Sekowska A."/>
            <person name="Seror S.J."/>
            <person name="Serror P."/>
            <person name="Shin B.-S."/>
            <person name="Soldo B."/>
            <person name="Sorokin A."/>
            <person name="Tacconi E."/>
            <person name="Takagi T."/>
            <person name="Takahashi H."/>
            <person name="Takemaru K."/>
            <person name="Takeuchi M."/>
            <person name="Tamakoshi A."/>
            <person name="Tanaka T."/>
            <person name="Terpstra P."/>
            <person name="Tognoni A."/>
            <person name="Tosato V."/>
            <person name="Uchiyama S."/>
            <person name="Vandenbol M."/>
            <person name="Vannier F."/>
            <person name="Vassarotti A."/>
            <person name="Viari A."/>
            <person name="Wambutt R."/>
            <person name="Wedler E."/>
            <person name="Wedler H."/>
            <person name="Weitzenegger T."/>
            <person name="Winters P."/>
            <person name="Wipat A."/>
            <person name="Yamamoto H."/>
            <person name="Yamane K."/>
            <person name="Yasumoto K."/>
            <person name="Yata K."/>
            <person name="Yoshida K."/>
            <person name="Yoshikawa H.-F."/>
            <person name="Zumstein E."/>
            <person name="Yoshikawa H."/>
            <person name="Danchin A."/>
        </authorList>
    </citation>
    <scope>NUCLEOTIDE SEQUENCE [LARGE SCALE GENOMIC DNA]</scope>
    <source>
        <strain>168</strain>
    </source>
</reference>
<reference key="2">
    <citation type="journal article" date="2009" name="Microbiology">
        <title>From a consortium sequence to a unified sequence: the Bacillus subtilis 168 reference genome a decade later.</title>
        <authorList>
            <person name="Barbe V."/>
            <person name="Cruveiller S."/>
            <person name="Kunst F."/>
            <person name="Lenoble P."/>
            <person name="Meurice G."/>
            <person name="Sekowska A."/>
            <person name="Vallenet D."/>
            <person name="Wang T."/>
            <person name="Moszer I."/>
            <person name="Medigue C."/>
            <person name="Danchin A."/>
        </authorList>
    </citation>
    <scope>SEQUENCE REVISION TO 127</scope>
</reference>
<reference key="3">
    <citation type="journal article" date="1986" name="EMBO J.">
        <title>Evolution of biosynthetic pathways: a common ancestor for threonine synthase, threonine dehydratase and D-serine dehydratase.</title>
        <authorList>
            <person name="Parsot C."/>
        </authorList>
    </citation>
    <scope>PRELIMINARY PARTIAL NUCLEOTIDE SEQUENCE [GENOMIC DNA]</scope>
    <source>
        <strain>168</strain>
    </source>
</reference>
<organism>
    <name type="scientific">Bacillus subtilis (strain 168)</name>
    <dbReference type="NCBI Taxonomy" id="224308"/>
    <lineage>
        <taxon>Bacteria</taxon>
        <taxon>Bacillati</taxon>
        <taxon>Bacillota</taxon>
        <taxon>Bacilli</taxon>
        <taxon>Bacillales</taxon>
        <taxon>Bacillaceae</taxon>
        <taxon>Bacillus</taxon>
    </lineage>
</organism>
<accession>P39839</accession>
<accession>O32120</accession>
<name>YUXL_BACSU</name>
<feature type="chain" id="PRO_0000122428" description="Uncharacterized peptidase YuxL">
    <location>
        <begin position="1"/>
        <end position="657"/>
    </location>
</feature>
<feature type="active site" description="Charge relay system" evidence="1">
    <location>
        <position position="518"/>
    </location>
</feature>
<feature type="active site" description="Charge relay system" evidence="1">
    <location>
        <position position="631"/>
    </location>
</feature>